<keyword id="KW-0067">ATP-binding</keyword>
<keyword id="KW-0520">NAD</keyword>
<keyword id="KW-0547">Nucleotide-binding</keyword>
<keyword id="KW-0548">Nucleotidyltransferase</keyword>
<keyword id="KW-0662">Pyridine nucleotide biosynthesis</keyword>
<keyword id="KW-0808">Transferase</keyword>
<proteinExistence type="inferred from homology"/>
<sequence>MKIGLYFGTYNPIHVGHLIIANHMAEFADLDQIWMVVTPHNPLKKKSTLLDDQQRLQMVYLATEDYTKIKPSDIEFKLPQPSYTVITLEHLKEKYPNHEFSLIMGEDNLKTLHKWRNYEVILENHDIYVYPRISDEPENVELKSHPKIHVIDAPIVEISSTFIRNSIKEGKNIQPLLPPKVWEYIDHNNFYKK</sequence>
<feature type="chain" id="PRO_0000336690" description="Probable nicotinate-nucleotide adenylyltransferase">
    <location>
        <begin position="1"/>
        <end position="193"/>
    </location>
</feature>
<reference key="1">
    <citation type="journal article" date="2009" name="Appl. Environ. Microbiol.">
        <title>Novel features of the polysaccharide-digesting gliding bacterium Flavobacterium johnsoniae as revealed by genome sequence analysis.</title>
        <authorList>
            <person name="McBride M.J."/>
            <person name="Xie G."/>
            <person name="Martens E.C."/>
            <person name="Lapidus A."/>
            <person name="Henrissat B."/>
            <person name="Rhodes R.G."/>
            <person name="Goltsman E."/>
            <person name="Wang W."/>
            <person name="Xu J."/>
            <person name="Hunnicutt D.W."/>
            <person name="Staroscik A.M."/>
            <person name="Hoover T.R."/>
            <person name="Cheng Y.Q."/>
            <person name="Stein J.L."/>
        </authorList>
    </citation>
    <scope>NUCLEOTIDE SEQUENCE [LARGE SCALE GENOMIC DNA]</scope>
    <source>
        <strain>ATCC 17061 / DSM 2064 / JCM 8514 / BCRC 14874 / CCUG 350202 / NBRC 14942 / NCIMB 11054 / UW101</strain>
    </source>
</reference>
<protein>
    <recommendedName>
        <fullName evidence="1">Probable nicotinate-nucleotide adenylyltransferase</fullName>
        <ecNumber evidence="1">2.7.7.18</ecNumber>
    </recommendedName>
    <alternativeName>
        <fullName evidence="1">Deamido-NAD(+) diphosphorylase</fullName>
    </alternativeName>
    <alternativeName>
        <fullName evidence="1">Deamido-NAD(+) pyrophosphorylase</fullName>
    </alternativeName>
    <alternativeName>
        <fullName evidence="1">Nicotinate mononucleotide adenylyltransferase</fullName>
        <shortName evidence="1">NaMN adenylyltransferase</shortName>
    </alternativeName>
</protein>
<dbReference type="EC" id="2.7.7.18" evidence="1"/>
<dbReference type="EMBL" id="CP000685">
    <property type="protein sequence ID" value="ABQ03779.1"/>
    <property type="molecule type" value="Genomic_DNA"/>
</dbReference>
<dbReference type="RefSeq" id="WP_012022833.1">
    <property type="nucleotide sequence ID" value="NC_009441.1"/>
</dbReference>
<dbReference type="SMR" id="A5FLZ0"/>
<dbReference type="STRING" id="376686.Fjoh_0744"/>
<dbReference type="KEGG" id="fjo:Fjoh_0744"/>
<dbReference type="eggNOG" id="COG1057">
    <property type="taxonomic scope" value="Bacteria"/>
</dbReference>
<dbReference type="HOGENOM" id="CLU_069765_3_3_10"/>
<dbReference type="OrthoDB" id="5295945at2"/>
<dbReference type="UniPathway" id="UPA00253">
    <property type="reaction ID" value="UER00332"/>
</dbReference>
<dbReference type="Proteomes" id="UP000006694">
    <property type="component" value="Chromosome"/>
</dbReference>
<dbReference type="GO" id="GO:0005524">
    <property type="term" value="F:ATP binding"/>
    <property type="evidence" value="ECO:0007669"/>
    <property type="project" value="UniProtKB-KW"/>
</dbReference>
<dbReference type="GO" id="GO:0004515">
    <property type="term" value="F:nicotinate-nucleotide adenylyltransferase activity"/>
    <property type="evidence" value="ECO:0007669"/>
    <property type="project" value="UniProtKB-UniRule"/>
</dbReference>
<dbReference type="GO" id="GO:0009435">
    <property type="term" value="P:NAD biosynthetic process"/>
    <property type="evidence" value="ECO:0007669"/>
    <property type="project" value="UniProtKB-UniRule"/>
</dbReference>
<dbReference type="CDD" id="cd02165">
    <property type="entry name" value="NMNAT"/>
    <property type="match status" value="1"/>
</dbReference>
<dbReference type="Gene3D" id="3.40.50.620">
    <property type="entry name" value="HUPs"/>
    <property type="match status" value="1"/>
</dbReference>
<dbReference type="HAMAP" id="MF_00244">
    <property type="entry name" value="NaMN_adenylyltr"/>
    <property type="match status" value="1"/>
</dbReference>
<dbReference type="InterPro" id="IPR004821">
    <property type="entry name" value="Cyt_trans-like"/>
</dbReference>
<dbReference type="InterPro" id="IPR005248">
    <property type="entry name" value="NadD/NMNAT"/>
</dbReference>
<dbReference type="InterPro" id="IPR014729">
    <property type="entry name" value="Rossmann-like_a/b/a_fold"/>
</dbReference>
<dbReference type="NCBIfam" id="TIGR00125">
    <property type="entry name" value="cyt_tran_rel"/>
    <property type="match status" value="1"/>
</dbReference>
<dbReference type="NCBIfam" id="TIGR00482">
    <property type="entry name" value="nicotinate (nicotinamide) nucleotide adenylyltransferase"/>
    <property type="match status" value="1"/>
</dbReference>
<dbReference type="PANTHER" id="PTHR39321">
    <property type="entry name" value="NICOTINATE-NUCLEOTIDE ADENYLYLTRANSFERASE-RELATED"/>
    <property type="match status" value="1"/>
</dbReference>
<dbReference type="PANTHER" id="PTHR39321:SF3">
    <property type="entry name" value="PHOSPHOPANTETHEINE ADENYLYLTRANSFERASE"/>
    <property type="match status" value="1"/>
</dbReference>
<dbReference type="Pfam" id="PF01467">
    <property type="entry name" value="CTP_transf_like"/>
    <property type="match status" value="1"/>
</dbReference>
<dbReference type="SUPFAM" id="SSF52374">
    <property type="entry name" value="Nucleotidylyl transferase"/>
    <property type="match status" value="1"/>
</dbReference>
<gene>
    <name evidence="1" type="primary">nadD</name>
    <name type="ordered locus">Fjoh_0744</name>
</gene>
<accession>A5FLZ0</accession>
<name>NADD_FLAJ1</name>
<organism>
    <name type="scientific">Flavobacterium johnsoniae (strain ATCC 17061 / DSM 2064 / JCM 8514 / BCRC 14874 / CCUG 350202 / NBRC 14942 / NCIMB 11054 / UW101)</name>
    <name type="common">Cytophaga johnsonae</name>
    <dbReference type="NCBI Taxonomy" id="376686"/>
    <lineage>
        <taxon>Bacteria</taxon>
        <taxon>Pseudomonadati</taxon>
        <taxon>Bacteroidota</taxon>
        <taxon>Flavobacteriia</taxon>
        <taxon>Flavobacteriales</taxon>
        <taxon>Flavobacteriaceae</taxon>
        <taxon>Flavobacterium</taxon>
    </lineage>
</organism>
<comment type="function">
    <text evidence="1">Catalyzes the reversible adenylation of nicotinate mononucleotide (NaMN) to nicotinic acid adenine dinucleotide (NaAD).</text>
</comment>
<comment type="catalytic activity">
    <reaction evidence="1">
        <text>nicotinate beta-D-ribonucleotide + ATP + H(+) = deamido-NAD(+) + diphosphate</text>
        <dbReference type="Rhea" id="RHEA:22860"/>
        <dbReference type="ChEBI" id="CHEBI:15378"/>
        <dbReference type="ChEBI" id="CHEBI:30616"/>
        <dbReference type="ChEBI" id="CHEBI:33019"/>
        <dbReference type="ChEBI" id="CHEBI:57502"/>
        <dbReference type="ChEBI" id="CHEBI:58437"/>
        <dbReference type="EC" id="2.7.7.18"/>
    </reaction>
</comment>
<comment type="pathway">
    <text evidence="1">Cofactor biosynthesis; NAD(+) biosynthesis; deamido-NAD(+) from nicotinate D-ribonucleotide: step 1/1.</text>
</comment>
<comment type="similarity">
    <text evidence="1">Belongs to the NadD family.</text>
</comment>
<evidence type="ECO:0000255" key="1">
    <source>
        <dbReference type="HAMAP-Rule" id="MF_00244"/>
    </source>
</evidence>